<accession>A4WQX2</accession>
<organism>
    <name type="scientific">Cereibacter sphaeroides (strain ATCC 17025 / ATH 2.4.3)</name>
    <name type="common">Rhodobacter sphaeroides</name>
    <dbReference type="NCBI Taxonomy" id="349102"/>
    <lineage>
        <taxon>Bacteria</taxon>
        <taxon>Pseudomonadati</taxon>
        <taxon>Pseudomonadota</taxon>
        <taxon>Alphaproteobacteria</taxon>
        <taxon>Rhodobacterales</taxon>
        <taxon>Paracoccaceae</taxon>
        <taxon>Cereibacter</taxon>
    </lineage>
</organism>
<gene>
    <name evidence="1" type="primary">rpiA</name>
    <name type="ordered locus">Rsph17025_0883</name>
</gene>
<protein>
    <recommendedName>
        <fullName evidence="1">Ribose-5-phosphate isomerase A</fullName>
        <ecNumber evidence="1">5.3.1.6</ecNumber>
    </recommendedName>
    <alternativeName>
        <fullName evidence="1">Phosphoriboisomerase A</fullName>
        <shortName evidence="1">PRI</shortName>
    </alternativeName>
</protein>
<keyword id="KW-0413">Isomerase</keyword>
<name>RPIA_CERS5</name>
<reference key="1">
    <citation type="submission" date="2007-04" db="EMBL/GenBank/DDBJ databases">
        <title>Complete sequence of chromosome of Rhodobacter sphaeroides ATCC 17025.</title>
        <authorList>
            <consortium name="US DOE Joint Genome Institute"/>
            <person name="Copeland A."/>
            <person name="Lucas S."/>
            <person name="Lapidus A."/>
            <person name="Barry K."/>
            <person name="Detter J.C."/>
            <person name="Glavina del Rio T."/>
            <person name="Hammon N."/>
            <person name="Israni S."/>
            <person name="Dalin E."/>
            <person name="Tice H."/>
            <person name="Pitluck S."/>
            <person name="Chertkov O."/>
            <person name="Brettin T."/>
            <person name="Bruce D."/>
            <person name="Han C."/>
            <person name="Schmutz J."/>
            <person name="Larimer F."/>
            <person name="Land M."/>
            <person name="Hauser L."/>
            <person name="Kyrpides N."/>
            <person name="Kim E."/>
            <person name="Richardson P."/>
            <person name="Mackenzie C."/>
            <person name="Choudhary M."/>
            <person name="Donohue T.J."/>
            <person name="Kaplan S."/>
        </authorList>
    </citation>
    <scope>NUCLEOTIDE SEQUENCE [LARGE SCALE GENOMIC DNA]</scope>
    <source>
        <strain>ATCC 17025 / ATH 2.4.3</strain>
    </source>
</reference>
<dbReference type="EC" id="5.3.1.6" evidence="1"/>
<dbReference type="EMBL" id="CP000661">
    <property type="protein sequence ID" value="ABP69786.1"/>
    <property type="molecule type" value="Genomic_DNA"/>
</dbReference>
<dbReference type="SMR" id="A4WQX2"/>
<dbReference type="STRING" id="349102.Rsph17025_0883"/>
<dbReference type="KEGG" id="rsq:Rsph17025_0883"/>
<dbReference type="eggNOG" id="COG0120">
    <property type="taxonomic scope" value="Bacteria"/>
</dbReference>
<dbReference type="HOGENOM" id="CLU_056590_1_0_5"/>
<dbReference type="BioCyc" id="RSPH349102:G1G8M-905-MONOMER"/>
<dbReference type="UniPathway" id="UPA00115">
    <property type="reaction ID" value="UER00412"/>
</dbReference>
<dbReference type="GO" id="GO:0005829">
    <property type="term" value="C:cytosol"/>
    <property type="evidence" value="ECO:0007669"/>
    <property type="project" value="TreeGrafter"/>
</dbReference>
<dbReference type="GO" id="GO:0004751">
    <property type="term" value="F:ribose-5-phosphate isomerase activity"/>
    <property type="evidence" value="ECO:0007669"/>
    <property type="project" value="UniProtKB-UniRule"/>
</dbReference>
<dbReference type="GO" id="GO:0006014">
    <property type="term" value="P:D-ribose metabolic process"/>
    <property type="evidence" value="ECO:0007669"/>
    <property type="project" value="TreeGrafter"/>
</dbReference>
<dbReference type="GO" id="GO:0009052">
    <property type="term" value="P:pentose-phosphate shunt, non-oxidative branch"/>
    <property type="evidence" value="ECO:0007669"/>
    <property type="project" value="UniProtKB-UniRule"/>
</dbReference>
<dbReference type="CDD" id="cd01398">
    <property type="entry name" value="RPI_A"/>
    <property type="match status" value="1"/>
</dbReference>
<dbReference type="FunFam" id="3.40.50.1360:FF:000001">
    <property type="entry name" value="Ribose-5-phosphate isomerase A"/>
    <property type="match status" value="1"/>
</dbReference>
<dbReference type="Gene3D" id="3.30.70.260">
    <property type="match status" value="1"/>
</dbReference>
<dbReference type="Gene3D" id="3.40.50.1360">
    <property type="match status" value="1"/>
</dbReference>
<dbReference type="HAMAP" id="MF_00170">
    <property type="entry name" value="Rib_5P_isom_A"/>
    <property type="match status" value="1"/>
</dbReference>
<dbReference type="InterPro" id="IPR037171">
    <property type="entry name" value="NagB/RpiA_transferase-like"/>
</dbReference>
<dbReference type="InterPro" id="IPR020672">
    <property type="entry name" value="Ribose5P_isomerase_typA_subgr"/>
</dbReference>
<dbReference type="InterPro" id="IPR004788">
    <property type="entry name" value="Ribose5P_isomerase_type_A"/>
</dbReference>
<dbReference type="NCBIfam" id="NF001924">
    <property type="entry name" value="PRK00702.1"/>
    <property type="match status" value="1"/>
</dbReference>
<dbReference type="NCBIfam" id="TIGR00021">
    <property type="entry name" value="rpiA"/>
    <property type="match status" value="1"/>
</dbReference>
<dbReference type="PANTHER" id="PTHR11934">
    <property type="entry name" value="RIBOSE-5-PHOSPHATE ISOMERASE"/>
    <property type="match status" value="1"/>
</dbReference>
<dbReference type="PANTHER" id="PTHR11934:SF0">
    <property type="entry name" value="RIBOSE-5-PHOSPHATE ISOMERASE"/>
    <property type="match status" value="1"/>
</dbReference>
<dbReference type="Pfam" id="PF06026">
    <property type="entry name" value="Rib_5-P_isom_A"/>
    <property type="match status" value="1"/>
</dbReference>
<dbReference type="SUPFAM" id="SSF75445">
    <property type="entry name" value="D-ribose-5-phosphate isomerase (RpiA), lid domain"/>
    <property type="match status" value="1"/>
</dbReference>
<dbReference type="SUPFAM" id="SSF100950">
    <property type="entry name" value="NagB/RpiA/CoA transferase-like"/>
    <property type="match status" value="1"/>
</dbReference>
<evidence type="ECO:0000255" key="1">
    <source>
        <dbReference type="HAMAP-Rule" id="MF_00170"/>
    </source>
</evidence>
<comment type="function">
    <text evidence="1">Catalyzes the reversible conversion of ribose-5-phosphate to ribulose 5-phosphate.</text>
</comment>
<comment type="catalytic activity">
    <reaction evidence="1">
        <text>aldehydo-D-ribose 5-phosphate = D-ribulose 5-phosphate</text>
        <dbReference type="Rhea" id="RHEA:14657"/>
        <dbReference type="ChEBI" id="CHEBI:58121"/>
        <dbReference type="ChEBI" id="CHEBI:58273"/>
        <dbReference type="EC" id="5.3.1.6"/>
    </reaction>
</comment>
<comment type="pathway">
    <text evidence="1">Carbohydrate degradation; pentose phosphate pathway; D-ribose 5-phosphate from D-ribulose 5-phosphate (non-oxidative stage): step 1/1.</text>
</comment>
<comment type="subunit">
    <text evidence="1">Homodimer.</text>
</comment>
<comment type="similarity">
    <text evidence="1">Belongs to the ribose 5-phosphate isomerase family.</text>
</comment>
<feature type="chain" id="PRO_1000016981" description="Ribose-5-phosphate isomerase A">
    <location>
        <begin position="1"/>
        <end position="250"/>
    </location>
</feature>
<feature type="active site" description="Proton acceptor" evidence="1">
    <location>
        <position position="111"/>
    </location>
</feature>
<feature type="binding site" evidence="1">
    <location>
        <begin position="33"/>
        <end position="36"/>
    </location>
    <ligand>
        <name>substrate</name>
    </ligand>
</feature>
<feature type="binding site" evidence="1">
    <location>
        <begin position="89"/>
        <end position="92"/>
    </location>
    <ligand>
        <name>substrate</name>
    </ligand>
</feature>
<feature type="binding site" evidence="1">
    <location>
        <begin position="102"/>
        <end position="105"/>
    </location>
    <ligand>
        <name>substrate</name>
    </ligand>
</feature>
<feature type="binding site" evidence="1">
    <location>
        <position position="129"/>
    </location>
    <ligand>
        <name>substrate</name>
    </ligand>
</feature>
<proteinExistence type="inferred from homology"/>
<sequence length="250" mass="26996">MPAERSPIDTAKFAAARRAVDFVQDGMKLGLGTGSTAAWMVRCLAERVREEGLRVQGVPTSSRTAELARELGIPVVTLDEARWLDLTIDGADEFDSEFNLIKGGGAALLQEKIVATASDRMIVIADAAKEVAQLGAFPLPVEVIPFGWQSTRMLIEEALIGLDVLGREVTLRRSGEAPLLTDEKNYILDLHLTRIGHPRQLALTLNQIAGVVENGLFIDICDTVVVGHGDGRVTVRDLGASRNIFADLGE</sequence>